<dbReference type="EMBL" id="AM180252">
    <property type="protein sequence ID" value="CAJ55016.1"/>
    <property type="molecule type" value="Genomic_DNA"/>
</dbReference>
<dbReference type="RefSeq" id="WP_011527045.1">
    <property type="nucleotide sequence ID" value="NC_008011.1"/>
</dbReference>
<dbReference type="SMR" id="Q1MPR1"/>
<dbReference type="STRING" id="363253.LI0962"/>
<dbReference type="KEGG" id="lip:LI0962"/>
<dbReference type="eggNOG" id="COG0089">
    <property type="taxonomic scope" value="Bacteria"/>
</dbReference>
<dbReference type="HOGENOM" id="CLU_037562_3_1_7"/>
<dbReference type="OrthoDB" id="9793353at2"/>
<dbReference type="Proteomes" id="UP000002430">
    <property type="component" value="Chromosome"/>
</dbReference>
<dbReference type="GO" id="GO:1990904">
    <property type="term" value="C:ribonucleoprotein complex"/>
    <property type="evidence" value="ECO:0007669"/>
    <property type="project" value="UniProtKB-KW"/>
</dbReference>
<dbReference type="GO" id="GO:0005840">
    <property type="term" value="C:ribosome"/>
    <property type="evidence" value="ECO:0007669"/>
    <property type="project" value="UniProtKB-KW"/>
</dbReference>
<dbReference type="GO" id="GO:0019843">
    <property type="term" value="F:rRNA binding"/>
    <property type="evidence" value="ECO:0007669"/>
    <property type="project" value="UniProtKB-UniRule"/>
</dbReference>
<dbReference type="GO" id="GO:0003735">
    <property type="term" value="F:structural constituent of ribosome"/>
    <property type="evidence" value="ECO:0007669"/>
    <property type="project" value="InterPro"/>
</dbReference>
<dbReference type="GO" id="GO:0006412">
    <property type="term" value="P:translation"/>
    <property type="evidence" value="ECO:0007669"/>
    <property type="project" value="UniProtKB-UniRule"/>
</dbReference>
<dbReference type="Gene3D" id="3.30.70.330">
    <property type="match status" value="1"/>
</dbReference>
<dbReference type="HAMAP" id="MF_01369_B">
    <property type="entry name" value="Ribosomal_uL23_B"/>
    <property type="match status" value="1"/>
</dbReference>
<dbReference type="InterPro" id="IPR012677">
    <property type="entry name" value="Nucleotide-bd_a/b_plait_sf"/>
</dbReference>
<dbReference type="InterPro" id="IPR013025">
    <property type="entry name" value="Ribosomal_uL23-like"/>
</dbReference>
<dbReference type="InterPro" id="IPR012678">
    <property type="entry name" value="Ribosomal_uL23/eL15/eS24_sf"/>
</dbReference>
<dbReference type="InterPro" id="IPR001014">
    <property type="entry name" value="Ribosomal_uL23_CS"/>
</dbReference>
<dbReference type="NCBIfam" id="NF004363">
    <property type="entry name" value="PRK05738.2-4"/>
    <property type="match status" value="1"/>
</dbReference>
<dbReference type="Pfam" id="PF00276">
    <property type="entry name" value="Ribosomal_L23"/>
    <property type="match status" value="1"/>
</dbReference>
<dbReference type="SUPFAM" id="SSF54189">
    <property type="entry name" value="Ribosomal proteins S24e, L23 and L15e"/>
    <property type="match status" value="1"/>
</dbReference>
<dbReference type="PROSITE" id="PS00050">
    <property type="entry name" value="RIBOSOMAL_L23"/>
    <property type="match status" value="1"/>
</dbReference>
<keyword id="KW-1185">Reference proteome</keyword>
<keyword id="KW-0687">Ribonucleoprotein</keyword>
<keyword id="KW-0689">Ribosomal protein</keyword>
<keyword id="KW-0694">RNA-binding</keyword>
<keyword id="KW-0699">rRNA-binding</keyword>
<protein>
    <recommendedName>
        <fullName evidence="1">Large ribosomal subunit protein uL23</fullName>
    </recommendedName>
    <alternativeName>
        <fullName evidence="2">50S ribosomal protein L23</fullName>
    </alternativeName>
</protein>
<sequence length="95" mass="10915">MHPTQIILRPVITEKVTILRDSVKKVAFFVHPQSNKIEVKKAIELLFNVKVMAINVVNYTPRVRTRNRRKVHVSGCRKAYVTLAPGEKISFFEGL</sequence>
<name>RL23_LAWIP</name>
<organism>
    <name type="scientific">Lawsonia intracellularis (strain PHE/MN1-00)</name>
    <dbReference type="NCBI Taxonomy" id="363253"/>
    <lineage>
        <taxon>Bacteria</taxon>
        <taxon>Pseudomonadati</taxon>
        <taxon>Thermodesulfobacteriota</taxon>
        <taxon>Desulfovibrionia</taxon>
        <taxon>Desulfovibrionales</taxon>
        <taxon>Desulfovibrionaceae</taxon>
        <taxon>Lawsonia</taxon>
    </lineage>
</organism>
<accession>Q1MPR1</accession>
<comment type="function">
    <text evidence="1">One of the early assembly proteins it binds 23S rRNA. One of the proteins that surrounds the polypeptide exit tunnel on the outside of the ribosome. Forms the main docking site for trigger factor binding to the ribosome.</text>
</comment>
<comment type="subunit">
    <text evidence="1">Part of the 50S ribosomal subunit. Contacts protein L29, and trigger factor when it is bound to the ribosome.</text>
</comment>
<comment type="similarity">
    <text evidence="1">Belongs to the universal ribosomal protein uL23 family.</text>
</comment>
<proteinExistence type="inferred from homology"/>
<reference key="1">
    <citation type="submission" date="2005-11" db="EMBL/GenBank/DDBJ databases">
        <title>The complete genome sequence of Lawsonia intracellularis: the causative agent of proliferative enteropathy.</title>
        <authorList>
            <person name="Kaur K."/>
            <person name="Zhang Q."/>
            <person name="Beckler D."/>
            <person name="Munir S."/>
            <person name="Li L."/>
            <person name="Kinsley K."/>
            <person name="Herron L."/>
            <person name="Peterson A."/>
            <person name="May B."/>
            <person name="Singh S."/>
            <person name="Gebhart C."/>
            <person name="Kapur V."/>
        </authorList>
    </citation>
    <scope>NUCLEOTIDE SEQUENCE [LARGE SCALE GENOMIC DNA]</scope>
    <source>
        <strain>PHE/MN1-00</strain>
    </source>
</reference>
<evidence type="ECO:0000255" key="1">
    <source>
        <dbReference type="HAMAP-Rule" id="MF_01369"/>
    </source>
</evidence>
<evidence type="ECO:0000305" key="2"/>
<gene>
    <name evidence="1" type="primary">rplW</name>
    <name type="ordered locus">LI0962</name>
</gene>
<feature type="chain" id="PRO_1000068098" description="Large ribosomal subunit protein uL23">
    <location>
        <begin position="1"/>
        <end position="95"/>
    </location>
</feature>